<feature type="chain" id="PRO_0000109605" description="Protein translocase subunit SecA 1">
    <location>
        <begin position="1"/>
        <end position="843"/>
    </location>
</feature>
<feature type="region of interest" description="Disordered" evidence="2">
    <location>
        <begin position="799"/>
        <end position="826"/>
    </location>
</feature>
<feature type="compositionally biased region" description="Basic and acidic residues" evidence="2">
    <location>
        <begin position="799"/>
        <end position="813"/>
    </location>
</feature>
<feature type="binding site" evidence="1">
    <location>
        <position position="91"/>
    </location>
    <ligand>
        <name>ATP</name>
        <dbReference type="ChEBI" id="CHEBI:30616"/>
    </ligand>
</feature>
<feature type="binding site" evidence="1">
    <location>
        <begin position="109"/>
        <end position="113"/>
    </location>
    <ligand>
        <name>ATP</name>
        <dbReference type="ChEBI" id="CHEBI:30616"/>
    </ligand>
</feature>
<feature type="binding site" evidence="1">
    <location>
        <position position="498"/>
    </location>
    <ligand>
        <name>ATP</name>
        <dbReference type="ChEBI" id="CHEBI:30616"/>
    </ligand>
</feature>
<feature type="binding site" evidence="1">
    <location>
        <position position="829"/>
    </location>
    <ligand>
        <name>Zn(2+)</name>
        <dbReference type="ChEBI" id="CHEBI:29105"/>
    </ligand>
</feature>
<feature type="binding site" evidence="1">
    <location>
        <position position="831"/>
    </location>
    <ligand>
        <name>Zn(2+)</name>
        <dbReference type="ChEBI" id="CHEBI:29105"/>
    </ligand>
</feature>
<feature type="binding site" evidence="1">
    <location>
        <position position="840"/>
    </location>
    <ligand>
        <name>Zn(2+)</name>
        <dbReference type="ChEBI" id="CHEBI:29105"/>
    </ligand>
</feature>
<feature type="binding site" evidence="1">
    <location>
        <position position="841"/>
    </location>
    <ligand>
        <name>Zn(2+)</name>
        <dbReference type="ChEBI" id="CHEBI:29105"/>
    </ligand>
</feature>
<sequence length="843" mass="95976">MGFLSKILDGNNKEIKQLGKLADKVIALEEKTAILTDEEIRNKTKQFQTELADIDNVKKQNDYLDKILPEAYALVREGSKRVFNMTPYKVQIMGGIAIHKGDIAEMRTGEGKTLTATMPTYLNALAGRGVHVITVNEYLSSVQSEEMAELYNFLGLTVGLNLNSKTTEEKREAYAQDITYSTNNELGFDYLRDNMVNYSEDRVMRPLHFAIIDEVDSILIDEARTPLIISGEAEKSTSLYTQANVFAKMLKQDEDYKYDEKTKSVHLTEQGADKAERMFKVENLYDVQNVDVISHINTALRAHVTLQRDVDYMVVDGEVLIVDQFTGRTMPGRRFSEGLHQAIEAKEGVQIQNESKTMASITFQNYFRMYNKLAGMTGTAKTEEEEFRNIYNMTVTQIPTNKPVQRNDKSDLIYISQKGKFDAVVEDVVEKHKAGQPVLLGTVAVETSEYISNLLKKRGIRHDVLNAKNHEREAEIVAGAGQKGAVTIATNMAGRGTDIKLGEGVEELGGLAVIGTERHESRRIDDQLRGRSGRQGDKGDSRFYLSLQDELMIRFGSERLQKMMSRLGLDDSTPIESKMVSRAVESAQKRVEGNNFDARKRILEYDEVLRKQREIIYNERNSIIDEEDSSQVVDAMLRSTLQRSINYYINTADDEPEYQPFIDYINDIFLQEGDITEDDIKGKDAEDIFEVVWAKIEAAYQSQKDILEEQMNEFERMILLRSIDSHWTDHIDTMDQLRQGIHLRSYAQQNPLRDYQNEGHELFDIMMQNIEEDTCKFILKSVVQVEDNIEREKTTEFGEAKHVSAEDGKEKVKPKPIVKGDQVGRNDDCPCGSGKKFKNCHGK</sequence>
<reference key="1">
    <citation type="journal article" date="2004" name="Proc. Natl. Acad. Sci. U.S.A.">
        <title>Complete genomes of two clinical Staphylococcus aureus strains: evidence for the rapid evolution of virulence and drug resistance.</title>
        <authorList>
            <person name="Holden M.T.G."/>
            <person name="Feil E.J."/>
            <person name="Lindsay J.A."/>
            <person name="Peacock S.J."/>
            <person name="Day N.P.J."/>
            <person name="Enright M.C."/>
            <person name="Foster T.J."/>
            <person name="Moore C.E."/>
            <person name="Hurst L."/>
            <person name="Atkin R."/>
            <person name="Barron A."/>
            <person name="Bason N."/>
            <person name="Bentley S.D."/>
            <person name="Chillingworth C."/>
            <person name="Chillingworth T."/>
            <person name="Churcher C."/>
            <person name="Clark L."/>
            <person name="Corton C."/>
            <person name="Cronin A."/>
            <person name="Doggett J."/>
            <person name="Dowd L."/>
            <person name="Feltwell T."/>
            <person name="Hance Z."/>
            <person name="Harris B."/>
            <person name="Hauser H."/>
            <person name="Holroyd S."/>
            <person name="Jagels K."/>
            <person name="James K.D."/>
            <person name="Lennard N."/>
            <person name="Line A."/>
            <person name="Mayes R."/>
            <person name="Moule S."/>
            <person name="Mungall K."/>
            <person name="Ormond D."/>
            <person name="Quail M.A."/>
            <person name="Rabbinowitsch E."/>
            <person name="Rutherford K.M."/>
            <person name="Sanders M."/>
            <person name="Sharp S."/>
            <person name="Simmonds M."/>
            <person name="Stevens K."/>
            <person name="Whitehead S."/>
            <person name="Barrell B.G."/>
            <person name="Spratt B.G."/>
            <person name="Parkhill J."/>
        </authorList>
    </citation>
    <scope>NUCLEOTIDE SEQUENCE [LARGE SCALE GENOMIC DNA]</scope>
    <source>
        <strain>MRSA252</strain>
    </source>
</reference>
<evidence type="ECO:0000255" key="1">
    <source>
        <dbReference type="HAMAP-Rule" id="MF_01382"/>
    </source>
</evidence>
<evidence type="ECO:0000256" key="2">
    <source>
        <dbReference type="SAM" id="MobiDB-lite"/>
    </source>
</evidence>
<gene>
    <name evidence="1" type="primary">secA1</name>
    <name type="ordered locus">SAR0807</name>
</gene>
<comment type="function">
    <text evidence="1">Part of the Sec protein translocase complex. Interacts with the SecYEG preprotein conducting channel. Has a central role in coupling the hydrolysis of ATP to the transfer of proteins into and across the cell membrane, serving as an ATP-driven molecular motor driving the stepwise translocation of polypeptide chains across the membrane.</text>
</comment>
<comment type="catalytic activity">
    <reaction evidence="1">
        <text>ATP + H2O + cellular proteinSide 1 = ADP + phosphate + cellular proteinSide 2.</text>
        <dbReference type="EC" id="7.4.2.8"/>
    </reaction>
</comment>
<comment type="cofactor">
    <cofactor evidence="1">
        <name>Zn(2+)</name>
        <dbReference type="ChEBI" id="CHEBI:29105"/>
    </cofactor>
    <text evidence="1">May bind 1 zinc ion per subunit.</text>
</comment>
<comment type="subunit">
    <text evidence="1">Monomer and homodimer. Part of the essential Sec protein translocation apparatus which comprises SecA, SecYEG and auxiliary proteins SecDF. Other proteins may also be involved.</text>
</comment>
<comment type="subcellular location">
    <subcellularLocation>
        <location evidence="1">Cell membrane</location>
        <topology evidence="1">Peripheral membrane protein</topology>
        <orientation evidence="1">Cytoplasmic side</orientation>
    </subcellularLocation>
    <subcellularLocation>
        <location evidence="1">Cytoplasm</location>
    </subcellularLocation>
    <text evidence="1">Distribution is 50-50.</text>
</comment>
<comment type="similarity">
    <text evidence="1">Belongs to the SecA family.</text>
</comment>
<name>SECA1_STAAR</name>
<organism>
    <name type="scientific">Staphylococcus aureus (strain MRSA252)</name>
    <dbReference type="NCBI Taxonomy" id="282458"/>
    <lineage>
        <taxon>Bacteria</taxon>
        <taxon>Bacillati</taxon>
        <taxon>Bacillota</taxon>
        <taxon>Bacilli</taxon>
        <taxon>Bacillales</taxon>
        <taxon>Staphylococcaceae</taxon>
        <taxon>Staphylococcus</taxon>
    </lineage>
</organism>
<protein>
    <recommendedName>
        <fullName evidence="1">Protein translocase subunit SecA 1</fullName>
        <ecNumber evidence="1">7.4.2.8</ecNumber>
    </recommendedName>
</protein>
<keyword id="KW-0067">ATP-binding</keyword>
<keyword id="KW-1003">Cell membrane</keyword>
<keyword id="KW-0963">Cytoplasm</keyword>
<keyword id="KW-0472">Membrane</keyword>
<keyword id="KW-0479">Metal-binding</keyword>
<keyword id="KW-0547">Nucleotide-binding</keyword>
<keyword id="KW-0653">Protein transport</keyword>
<keyword id="KW-1278">Translocase</keyword>
<keyword id="KW-0811">Translocation</keyword>
<keyword id="KW-0813">Transport</keyword>
<keyword id="KW-0862">Zinc</keyword>
<dbReference type="EC" id="7.4.2.8" evidence="1"/>
<dbReference type="EMBL" id="BX571856">
    <property type="protein sequence ID" value="CAG39817.1"/>
    <property type="molecule type" value="Genomic_DNA"/>
</dbReference>
<dbReference type="SMR" id="Q6GIN8"/>
<dbReference type="KEGG" id="sar:SAR0807"/>
<dbReference type="HOGENOM" id="CLU_005314_3_0_9"/>
<dbReference type="Proteomes" id="UP000000596">
    <property type="component" value="Chromosome"/>
</dbReference>
<dbReference type="GO" id="GO:0031522">
    <property type="term" value="C:cell envelope Sec protein transport complex"/>
    <property type="evidence" value="ECO:0007669"/>
    <property type="project" value="TreeGrafter"/>
</dbReference>
<dbReference type="GO" id="GO:0005829">
    <property type="term" value="C:cytosol"/>
    <property type="evidence" value="ECO:0007669"/>
    <property type="project" value="TreeGrafter"/>
</dbReference>
<dbReference type="GO" id="GO:0005886">
    <property type="term" value="C:plasma membrane"/>
    <property type="evidence" value="ECO:0007669"/>
    <property type="project" value="UniProtKB-SubCell"/>
</dbReference>
<dbReference type="GO" id="GO:0005524">
    <property type="term" value="F:ATP binding"/>
    <property type="evidence" value="ECO:0007669"/>
    <property type="project" value="UniProtKB-UniRule"/>
</dbReference>
<dbReference type="GO" id="GO:0046872">
    <property type="term" value="F:metal ion binding"/>
    <property type="evidence" value="ECO:0007669"/>
    <property type="project" value="UniProtKB-KW"/>
</dbReference>
<dbReference type="GO" id="GO:0008564">
    <property type="term" value="F:protein-exporting ATPase activity"/>
    <property type="evidence" value="ECO:0007669"/>
    <property type="project" value="UniProtKB-EC"/>
</dbReference>
<dbReference type="GO" id="GO:0065002">
    <property type="term" value="P:intracellular protein transmembrane transport"/>
    <property type="evidence" value="ECO:0007669"/>
    <property type="project" value="UniProtKB-UniRule"/>
</dbReference>
<dbReference type="GO" id="GO:0017038">
    <property type="term" value="P:protein import"/>
    <property type="evidence" value="ECO:0007669"/>
    <property type="project" value="InterPro"/>
</dbReference>
<dbReference type="GO" id="GO:0006605">
    <property type="term" value="P:protein targeting"/>
    <property type="evidence" value="ECO:0007669"/>
    <property type="project" value="UniProtKB-UniRule"/>
</dbReference>
<dbReference type="GO" id="GO:0043952">
    <property type="term" value="P:protein transport by the Sec complex"/>
    <property type="evidence" value="ECO:0007669"/>
    <property type="project" value="TreeGrafter"/>
</dbReference>
<dbReference type="CDD" id="cd17928">
    <property type="entry name" value="DEXDc_SecA"/>
    <property type="match status" value="1"/>
</dbReference>
<dbReference type="CDD" id="cd18803">
    <property type="entry name" value="SF2_C_secA"/>
    <property type="match status" value="1"/>
</dbReference>
<dbReference type="FunFam" id="3.40.50.300:FF:000694">
    <property type="entry name" value="Preprotein translocase subunit SecA"/>
    <property type="match status" value="1"/>
</dbReference>
<dbReference type="FunFam" id="3.90.1440.10:FF:000002">
    <property type="entry name" value="Protein translocase subunit SecA"/>
    <property type="match status" value="1"/>
</dbReference>
<dbReference type="Gene3D" id="1.10.3060.10">
    <property type="entry name" value="Helical scaffold and wing domains of SecA"/>
    <property type="match status" value="1"/>
</dbReference>
<dbReference type="Gene3D" id="3.40.50.300">
    <property type="entry name" value="P-loop containing nucleotide triphosphate hydrolases"/>
    <property type="match status" value="2"/>
</dbReference>
<dbReference type="Gene3D" id="3.90.1440.10">
    <property type="entry name" value="SecA, preprotein cross-linking domain"/>
    <property type="match status" value="1"/>
</dbReference>
<dbReference type="HAMAP" id="MF_01382">
    <property type="entry name" value="SecA"/>
    <property type="match status" value="1"/>
</dbReference>
<dbReference type="InterPro" id="IPR014001">
    <property type="entry name" value="Helicase_ATP-bd"/>
</dbReference>
<dbReference type="InterPro" id="IPR001650">
    <property type="entry name" value="Helicase_C-like"/>
</dbReference>
<dbReference type="InterPro" id="IPR027417">
    <property type="entry name" value="P-loop_NTPase"/>
</dbReference>
<dbReference type="InterPro" id="IPR004027">
    <property type="entry name" value="SEC_C_motif"/>
</dbReference>
<dbReference type="InterPro" id="IPR000185">
    <property type="entry name" value="SecA"/>
</dbReference>
<dbReference type="InterPro" id="IPR020937">
    <property type="entry name" value="SecA_CS"/>
</dbReference>
<dbReference type="InterPro" id="IPR011115">
    <property type="entry name" value="SecA_DEAD"/>
</dbReference>
<dbReference type="InterPro" id="IPR014018">
    <property type="entry name" value="SecA_motor_DEAD"/>
</dbReference>
<dbReference type="InterPro" id="IPR011130">
    <property type="entry name" value="SecA_preprotein_X-link_dom"/>
</dbReference>
<dbReference type="InterPro" id="IPR044722">
    <property type="entry name" value="SecA_SF2_C"/>
</dbReference>
<dbReference type="InterPro" id="IPR011116">
    <property type="entry name" value="SecA_Wing/Scaffold"/>
</dbReference>
<dbReference type="InterPro" id="IPR036266">
    <property type="entry name" value="SecA_Wing/Scaffold_sf"/>
</dbReference>
<dbReference type="InterPro" id="IPR036670">
    <property type="entry name" value="SecA_X-link_sf"/>
</dbReference>
<dbReference type="NCBIfam" id="NF006630">
    <property type="entry name" value="PRK09200.1"/>
    <property type="match status" value="1"/>
</dbReference>
<dbReference type="NCBIfam" id="TIGR00963">
    <property type="entry name" value="secA"/>
    <property type="match status" value="1"/>
</dbReference>
<dbReference type="PANTHER" id="PTHR30612:SF0">
    <property type="entry name" value="CHLOROPLAST PROTEIN-TRANSPORTING ATPASE"/>
    <property type="match status" value="1"/>
</dbReference>
<dbReference type="PANTHER" id="PTHR30612">
    <property type="entry name" value="SECA INNER MEMBRANE COMPONENT OF SEC PROTEIN SECRETION SYSTEM"/>
    <property type="match status" value="1"/>
</dbReference>
<dbReference type="Pfam" id="PF21090">
    <property type="entry name" value="P-loop_SecA"/>
    <property type="match status" value="1"/>
</dbReference>
<dbReference type="Pfam" id="PF02810">
    <property type="entry name" value="SEC-C"/>
    <property type="match status" value="1"/>
</dbReference>
<dbReference type="Pfam" id="PF07517">
    <property type="entry name" value="SecA_DEAD"/>
    <property type="match status" value="1"/>
</dbReference>
<dbReference type="Pfam" id="PF01043">
    <property type="entry name" value="SecA_PP_bind"/>
    <property type="match status" value="1"/>
</dbReference>
<dbReference type="Pfam" id="PF07516">
    <property type="entry name" value="SecA_SW"/>
    <property type="match status" value="1"/>
</dbReference>
<dbReference type="PRINTS" id="PR00906">
    <property type="entry name" value="SECA"/>
</dbReference>
<dbReference type="SMART" id="SM00957">
    <property type="entry name" value="SecA_DEAD"/>
    <property type="match status" value="1"/>
</dbReference>
<dbReference type="SMART" id="SM00958">
    <property type="entry name" value="SecA_PP_bind"/>
    <property type="match status" value="1"/>
</dbReference>
<dbReference type="SUPFAM" id="SSF81886">
    <property type="entry name" value="Helical scaffold and wing domains of SecA"/>
    <property type="match status" value="1"/>
</dbReference>
<dbReference type="SUPFAM" id="SSF52540">
    <property type="entry name" value="P-loop containing nucleoside triphosphate hydrolases"/>
    <property type="match status" value="2"/>
</dbReference>
<dbReference type="SUPFAM" id="SSF81767">
    <property type="entry name" value="Pre-protein crosslinking domain of SecA"/>
    <property type="match status" value="1"/>
</dbReference>
<dbReference type="PROSITE" id="PS01312">
    <property type="entry name" value="SECA"/>
    <property type="match status" value="1"/>
</dbReference>
<dbReference type="PROSITE" id="PS51196">
    <property type="entry name" value="SECA_MOTOR_DEAD"/>
    <property type="match status" value="1"/>
</dbReference>
<proteinExistence type="inferred from homology"/>
<accession>Q6GIN8</accession>